<reference key="1">
    <citation type="journal article" date="2011" name="Toxicon">
        <title>Phylogenetic analysis of serine proteases from Russell's viper (Daboia russelli siamensis) and Agkistrodon piscivorus leucostoma venom.</title>
        <authorList>
            <person name="Sukkapan P."/>
            <person name="Jia Y."/>
            <person name="Nuchprayoon I."/>
            <person name="Perez J.C."/>
        </authorList>
    </citation>
    <scope>NUCLEOTIDE SEQUENCE [MRNA]</scope>
    <source>
        <tissue>Venom gland</tissue>
    </source>
</reference>
<reference key="2">
    <citation type="journal article" date="1988" name="J. Biol. Chem.">
        <title>The factor V-activating enzyme (RVV-V) from Russell's viper venom. Identification of isoproteins RVV-V alpha, -V beta, and -V gamma and their complete amino acid sequences.</title>
        <authorList>
            <person name="Tokunaga F."/>
            <person name="Nagasawa K."/>
            <person name="Tamura S."/>
            <person name="Miyata T."/>
            <person name="Iwanaga S."/>
            <person name="Kisiel W."/>
        </authorList>
    </citation>
    <scope>PROTEIN SEQUENCE OF 25-260</scope>
    <scope>FUNCTION</scope>
    <scope>GLYCOSYLATION AT ASN-253</scope>
    <source>
        <tissue>Venom</tissue>
    </source>
</reference>
<reference key="3">
    <citation type="journal article" date="2009" name="Acta Crystallogr. F">
        <title>Crystallization and preliminary X-ray crystallographic analysis of blood coagulation factor V-activating proteinase (RVV-V) from Russell's viper venom.</title>
        <authorList>
            <person name="Nakayama D."/>
            <person name="Ben Ammar Y."/>
            <person name="Takeda S."/>
        </authorList>
    </citation>
    <scope>CRYSTALLIZATION</scope>
</reference>
<reference key="4">
    <citation type="journal article" date="2011" name="FEBS Lett.">
        <title>Structural basis of coagulation factor V recognition for cleavage by RVV-V.</title>
        <authorList>
            <person name="Nakayama D."/>
            <person name="Ben Ammar Y."/>
            <person name="Miyata T."/>
            <person name="Takeda S."/>
        </authorList>
    </citation>
    <scope>X-RAY CRYSTALLOGRAPHY (1.8 ANGSTROMS) OF 25-260</scope>
    <scope>ACTIVE SITE</scope>
    <scope>DISULFIDE BONDS</scope>
</reference>
<comment type="function">
    <text evidence="4">Venom serine protease that selectively activates factor V (F5) in a calcium-independent manner. It cleaves the Arg(1545)-Ser(1546) linkage in the human factor V molecule. Induces the coagulation of mammalian plasma.</text>
</comment>
<comment type="catalytic activity">
    <reaction>
        <text>Fully activates human clotting factor V by a single cleavage at the 1545-Trp-Tyr-Leu-Arg-|-Ser-Asn-Asn-Gly-1552 bond. Cattle, but not rabbit, factor V is cleaved, and no other proteins of the clotting system are attacked. Esterase activity is observed on Bz-Arg-OEt and Tos-Arg-OMe, and amidase activity on Phe-pipecolyl-Arg-NHPhNO2.</text>
        <dbReference type="EC" id="3.4.21.95"/>
    </reaction>
</comment>
<comment type="subunit">
    <text>Monomer.</text>
</comment>
<comment type="subcellular location">
    <subcellularLocation>
        <location evidence="4">Secreted</location>
    </subcellularLocation>
</comment>
<comment type="tissue specificity">
    <text evidence="5">Expressed by the venom gland.</text>
</comment>
<comment type="miscellaneous">
    <text evidence="5">There are three isoproteins of RVV-V, designated RVV-V alpha, V-beta, and V-gamma.</text>
</comment>
<comment type="similarity">
    <text evidence="5">Belongs to the peptidase S1 family. Snake venom subfamily.</text>
</comment>
<evidence type="ECO:0000255" key="1"/>
<evidence type="ECO:0000255" key="2">
    <source>
        <dbReference type="PROSITE-ProRule" id="PRU00274"/>
    </source>
</evidence>
<evidence type="ECO:0000269" key="3">
    <source>
    </source>
</evidence>
<evidence type="ECO:0000269" key="4">
    <source>
    </source>
</evidence>
<evidence type="ECO:0000305" key="5"/>
<evidence type="ECO:0007744" key="6">
    <source>
        <dbReference type="PDB" id="3S9A"/>
    </source>
</evidence>
<evidence type="ECO:0007744" key="7">
    <source>
        <dbReference type="PDB" id="3S9B"/>
    </source>
</evidence>
<evidence type="ECO:0007744" key="8">
    <source>
        <dbReference type="PDB" id="3S9C"/>
    </source>
</evidence>
<evidence type="ECO:0007744" key="9">
    <source>
        <dbReference type="PDB" id="3SBK"/>
    </source>
</evidence>
<evidence type="ECO:0007829" key="10">
    <source>
        <dbReference type="PDB" id="3S9C"/>
    </source>
</evidence>
<evidence type="ECO:0007829" key="11">
    <source>
        <dbReference type="PDB" id="3SBK"/>
    </source>
</evidence>
<sequence length="260" mass="28823">MVLIKVLANLLVLQLSYAQKSSELVVGGDECNINEHPFLVALYTSASSTIHCAGALINREWVLTAAHCDRRNIRIKLGMHSKNIRNEDEQIRVPRGKYFCLNTKFPNGLDKDIMLIRLRRPVTYSTHIAPVSLPSRSRGVGSRCRIMGWGKISTTEDTYPDVPHCTNIFIVKHKWCEPLYPWVPADSRTLCAGILKGGRDTCHGDSGGPLICNGEMHGIVAGGSEPCGQHLKPAVYTKVFDYNNWIQSIIAGNRTVTCPP</sequence>
<protein>
    <recommendedName>
        <fullName>Factor V activator RVV-V gamma</fullName>
        <ecNumber>3.4.21.95</ecNumber>
    </recommendedName>
    <alternativeName>
        <fullName>Russel's viper venom FV activator gamma</fullName>
        <shortName>RVV-V gamma</shortName>
    </alternativeName>
    <alternativeName>
        <fullName>Snake venom serine protease</fullName>
        <shortName>SVSP</shortName>
    </alternativeName>
</protein>
<dbReference type="EC" id="3.4.21.95"/>
<dbReference type="EMBL" id="HQ270463">
    <property type="protein sequence ID" value="ADP88558.1"/>
    <property type="molecule type" value="mRNA"/>
</dbReference>
<dbReference type="PIR" id="B32121">
    <property type="entry name" value="B32121"/>
</dbReference>
<dbReference type="PDB" id="3S9A">
    <property type="method" value="X-ray"/>
    <property type="resolution" value="1.90 A"/>
    <property type="chains" value="A=25-260"/>
</dbReference>
<dbReference type="PDB" id="3S9B">
    <property type="method" value="X-ray"/>
    <property type="resolution" value="1.90 A"/>
    <property type="chains" value="A=25-260"/>
</dbReference>
<dbReference type="PDB" id="3S9C">
    <property type="method" value="X-ray"/>
    <property type="resolution" value="1.80 A"/>
    <property type="chains" value="A=25-260"/>
</dbReference>
<dbReference type="PDB" id="3SBK">
    <property type="method" value="X-ray"/>
    <property type="resolution" value="2.55 A"/>
    <property type="chains" value="A=25-260"/>
</dbReference>
<dbReference type="PDBsum" id="3S9A"/>
<dbReference type="PDBsum" id="3S9B"/>
<dbReference type="PDBsum" id="3S9C"/>
<dbReference type="PDBsum" id="3SBK"/>
<dbReference type="SMR" id="P18965"/>
<dbReference type="MEROPS" id="S01.184"/>
<dbReference type="iPTMnet" id="P18965"/>
<dbReference type="BRENDA" id="3.4.21.95">
    <property type="organism ID" value="6667"/>
</dbReference>
<dbReference type="EvolutionaryTrace" id="P18965"/>
<dbReference type="GO" id="GO:0005576">
    <property type="term" value="C:extracellular region"/>
    <property type="evidence" value="ECO:0007669"/>
    <property type="project" value="UniProtKB-SubCell"/>
</dbReference>
<dbReference type="GO" id="GO:0030141">
    <property type="term" value="C:secretory granule"/>
    <property type="evidence" value="ECO:0007669"/>
    <property type="project" value="TreeGrafter"/>
</dbReference>
<dbReference type="GO" id="GO:0004252">
    <property type="term" value="F:serine-type endopeptidase activity"/>
    <property type="evidence" value="ECO:0007669"/>
    <property type="project" value="InterPro"/>
</dbReference>
<dbReference type="GO" id="GO:0090729">
    <property type="term" value="F:toxin activity"/>
    <property type="evidence" value="ECO:0007669"/>
    <property type="project" value="UniProtKB-KW"/>
</dbReference>
<dbReference type="GO" id="GO:0006508">
    <property type="term" value="P:proteolysis"/>
    <property type="evidence" value="ECO:0007669"/>
    <property type="project" value="UniProtKB-KW"/>
</dbReference>
<dbReference type="CDD" id="cd00190">
    <property type="entry name" value="Tryp_SPc"/>
    <property type="match status" value="1"/>
</dbReference>
<dbReference type="FunFam" id="2.40.10.10:FF:000010">
    <property type="entry name" value="Kallikrein related peptidase 11"/>
    <property type="match status" value="1"/>
</dbReference>
<dbReference type="Gene3D" id="2.40.10.10">
    <property type="entry name" value="Trypsin-like serine proteases"/>
    <property type="match status" value="2"/>
</dbReference>
<dbReference type="InterPro" id="IPR009003">
    <property type="entry name" value="Peptidase_S1_PA"/>
</dbReference>
<dbReference type="InterPro" id="IPR043504">
    <property type="entry name" value="Peptidase_S1_PA_chymotrypsin"/>
</dbReference>
<dbReference type="InterPro" id="IPR001314">
    <property type="entry name" value="Peptidase_S1A"/>
</dbReference>
<dbReference type="InterPro" id="IPR001254">
    <property type="entry name" value="Trypsin_dom"/>
</dbReference>
<dbReference type="InterPro" id="IPR018114">
    <property type="entry name" value="TRYPSIN_HIS"/>
</dbReference>
<dbReference type="InterPro" id="IPR033116">
    <property type="entry name" value="TRYPSIN_SER"/>
</dbReference>
<dbReference type="PANTHER" id="PTHR24271:SF47">
    <property type="entry name" value="KALLIKREIN-1"/>
    <property type="match status" value="1"/>
</dbReference>
<dbReference type="PANTHER" id="PTHR24271">
    <property type="entry name" value="KALLIKREIN-RELATED"/>
    <property type="match status" value="1"/>
</dbReference>
<dbReference type="Pfam" id="PF00089">
    <property type="entry name" value="Trypsin"/>
    <property type="match status" value="1"/>
</dbReference>
<dbReference type="PRINTS" id="PR00722">
    <property type="entry name" value="CHYMOTRYPSIN"/>
</dbReference>
<dbReference type="SMART" id="SM00020">
    <property type="entry name" value="Tryp_SPc"/>
    <property type="match status" value="1"/>
</dbReference>
<dbReference type="SUPFAM" id="SSF50494">
    <property type="entry name" value="Trypsin-like serine proteases"/>
    <property type="match status" value="1"/>
</dbReference>
<dbReference type="PROSITE" id="PS50240">
    <property type="entry name" value="TRYPSIN_DOM"/>
    <property type="match status" value="1"/>
</dbReference>
<dbReference type="PROSITE" id="PS00134">
    <property type="entry name" value="TRYPSIN_HIS"/>
    <property type="match status" value="1"/>
</dbReference>
<dbReference type="PROSITE" id="PS00135">
    <property type="entry name" value="TRYPSIN_SER"/>
    <property type="match status" value="1"/>
</dbReference>
<proteinExistence type="evidence at protein level"/>
<feature type="signal peptide" evidence="1">
    <location>
        <begin position="1"/>
        <end position="18"/>
    </location>
</feature>
<feature type="propeptide" id="PRO_0000432323" evidence="4">
    <location>
        <begin position="19"/>
        <end position="24"/>
    </location>
</feature>
<feature type="chain" id="PRO_0000088739" description="Factor V activator RVV-V gamma">
    <location>
        <begin position="25"/>
        <end position="260"/>
    </location>
</feature>
<feature type="domain" description="Peptidase S1" evidence="2">
    <location>
        <begin position="25"/>
        <end position="251"/>
    </location>
</feature>
<feature type="active site" description="Charge relay system" evidence="3">
    <location>
        <position position="67"/>
    </location>
</feature>
<feature type="active site" description="Charge relay system" evidence="3">
    <location>
        <position position="112"/>
    </location>
</feature>
<feature type="active site" description="Charge relay system" evidence="3">
    <location>
        <position position="206"/>
    </location>
</feature>
<feature type="glycosylation site" description="N-linked (GlcNAc...) asparagine" evidence="4">
    <location>
        <position position="253"/>
    </location>
</feature>
<feature type="disulfide bond" evidence="3 6 7 8 9">
    <location>
        <begin position="31"/>
        <end position="165"/>
    </location>
</feature>
<feature type="disulfide bond" evidence="2 3 6 7 8 9">
    <location>
        <begin position="52"/>
        <end position="68"/>
    </location>
</feature>
<feature type="disulfide bond" evidence="3 6 7 8 9">
    <location>
        <begin position="100"/>
        <end position="258"/>
    </location>
</feature>
<feature type="disulfide bond" evidence="2 3 6 7 8 9">
    <location>
        <begin position="144"/>
        <end position="212"/>
    </location>
</feature>
<feature type="disulfide bond" evidence="2 3 6 7 8 9">
    <location>
        <begin position="176"/>
        <end position="191"/>
    </location>
</feature>
<feature type="disulfide bond" evidence="2 3 6 7 8 9">
    <location>
        <begin position="202"/>
        <end position="227"/>
    </location>
</feature>
<feature type="sequence conflict" description="In Ref. 1; ADP88558." evidence="5" ref="1">
    <original>H</original>
    <variation>K</variation>
    <location>
        <position position="203"/>
    </location>
</feature>
<feature type="strand" evidence="10">
    <location>
        <begin position="39"/>
        <end position="44"/>
    </location>
</feature>
<feature type="strand" evidence="10">
    <location>
        <begin position="47"/>
        <end position="58"/>
    </location>
</feature>
<feature type="strand" evidence="10">
    <location>
        <begin position="61"/>
        <end position="64"/>
    </location>
</feature>
<feature type="helix" evidence="10">
    <location>
        <begin position="66"/>
        <end position="68"/>
    </location>
</feature>
<feature type="strand" evidence="10">
    <location>
        <begin position="73"/>
        <end position="78"/>
    </location>
</feature>
<feature type="strand" evidence="10">
    <location>
        <begin position="80"/>
        <end position="84"/>
    </location>
</feature>
<feature type="strand" evidence="10">
    <location>
        <begin position="90"/>
        <end position="92"/>
    </location>
</feature>
<feature type="strand" evidence="10">
    <location>
        <begin position="94"/>
        <end position="98"/>
    </location>
</feature>
<feature type="helix" evidence="10">
    <location>
        <begin position="109"/>
        <end position="111"/>
    </location>
</feature>
<feature type="strand" evidence="10">
    <location>
        <begin position="114"/>
        <end position="120"/>
    </location>
</feature>
<feature type="strand" evidence="10">
    <location>
        <begin position="143"/>
        <end position="150"/>
    </location>
</feature>
<feature type="strand" evidence="11">
    <location>
        <begin position="152"/>
        <end position="155"/>
    </location>
</feature>
<feature type="strand" evidence="10">
    <location>
        <begin position="164"/>
        <end position="171"/>
    </location>
</feature>
<feature type="helix" evidence="10">
    <location>
        <begin position="173"/>
        <end position="175"/>
    </location>
</feature>
<feature type="turn" evidence="10">
    <location>
        <begin position="176"/>
        <end position="179"/>
    </location>
</feature>
<feature type="strand" evidence="10">
    <location>
        <begin position="187"/>
        <end position="193"/>
    </location>
</feature>
<feature type="strand" evidence="10">
    <location>
        <begin position="209"/>
        <end position="212"/>
    </location>
</feature>
<feature type="strand" evidence="10">
    <location>
        <begin position="215"/>
        <end position="222"/>
    </location>
</feature>
<feature type="strand" evidence="10">
    <location>
        <begin position="234"/>
        <end position="238"/>
    </location>
</feature>
<feature type="helix" evidence="10">
    <location>
        <begin position="239"/>
        <end position="242"/>
    </location>
</feature>
<feature type="helix" evidence="10">
    <location>
        <begin position="243"/>
        <end position="251"/>
    </location>
</feature>
<organism>
    <name type="scientific">Daboia siamensis</name>
    <name type="common">Eastern Russel's viper</name>
    <name type="synonym">Daboia russelii siamensis</name>
    <dbReference type="NCBI Taxonomy" id="343250"/>
    <lineage>
        <taxon>Eukaryota</taxon>
        <taxon>Metazoa</taxon>
        <taxon>Chordata</taxon>
        <taxon>Craniata</taxon>
        <taxon>Vertebrata</taxon>
        <taxon>Euteleostomi</taxon>
        <taxon>Lepidosauria</taxon>
        <taxon>Squamata</taxon>
        <taxon>Bifurcata</taxon>
        <taxon>Unidentata</taxon>
        <taxon>Episquamata</taxon>
        <taxon>Toxicofera</taxon>
        <taxon>Serpentes</taxon>
        <taxon>Colubroidea</taxon>
        <taxon>Viperidae</taxon>
        <taxon>Viperinae</taxon>
        <taxon>Daboia</taxon>
    </lineage>
</organism>
<accession>P18965</accession>
<accession>E5L0E2</accession>
<name>VSPG_DABSI</name>
<keyword id="KW-0002">3D-structure</keyword>
<keyword id="KW-1204">Blood coagulation cascade activating toxin</keyword>
<keyword id="KW-0903">Direct protein sequencing</keyword>
<keyword id="KW-1015">Disulfide bond</keyword>
<keyword id="KW-0325">Glycoprotein</keyword>
<keyword id="KW-1199">Hemostasis impairing toxin</keyword>
<keyword id="KW-0378">Hydrolase</keyword>
<keyword id="KW-0645">Protease</keyword>
<keyword id="KW-0964">Secreted</keyword>
<keyword id="KW-0720">Serine protease</keyword>
<keyword id="KW-0732">Signal</keyword>
<keyword id="KW-0800">Toxin</keyword>